<accession>B3W6R6</accession>
<proteinExistence type="inferred from homology"/>
<dbReference type="EMBL" id="FM177140">
    <property type="protein sequence ID" value="CAQ65143.1"/>
    <property type="molecule type" value="Genomic_DNA"/>
</dbReference>
<dbReference type="SMR" id="B3W6R6"/>
<dbReference type="KEGG" id="lcb:LCABL_00110"/>
<dbReference type="HOGENOM" id="CLU_148710_2_2_9"/>
<dbReference type="GO" id="GO:0022627">
    <property type="term" value="C:cytosolic small ribosomal subunit"/>
    <property type="evidence" value="ECO:0007669"/>
    <property type="project" value="TreeGrafter"/>
</dbReference>
<dbReference type="GO" id="GO:0070181">
    <property type="term" value="F:small ribosomal subunit rRNA binding"/>
    <property type="evidence" value="ECO:0007669"/>
    <property type="project" value="TreeGrafter"/>
</dbReference>
<dbReference type="GO" id="GO:0003735">
    <property type="term" value="F:structural constituent of ribosome"/>
    <property type="evidence" value="ECO:0007669"/>
    <property type="project" value="InterPro"/>
</dbReference>
<dbReference type="GO" id="GO:0006412">
    <property type="term" value="P:translation"/>
    <property type="evidence" value="ECO:0007669"/>
    <property type="project" value="UniProtKB-UniRule"/>
</dbReference>
<dbReference type="FunFam" id="4.10.640.10:FF:000003">
    <property type="entry name" value="30S ribosomal protein S18"/>
    <property type="match status" value="1"/>
</dbReference>
<dbReference type="Gene3D" id="4.10.640.10">
    <property type="entry name" value="Ribosomal protein S18"/>
    <property type="match status" value="1"/>
</dbReference>
<dbReference type="HAMAP" id="MF_00270">
    <property type="entry name" value="Ribosomal_bS18"/>
    <property type="match status" value="1"/>
</dbReference>
<dbReference type="InterPro" id="IPR001648">
    <property type="entry name" value="Ribosomal_bS18"/>
</dbReference>
<dbReference type="InterPro" id="IPR018275">
    <property type="entry name" value="Ribosomal_bS18_CS"/>
</dbReference>
<dbReference type="InterPro" id="IPR036870">
    <property type="entry name" value="Ribosomal_bS18_sf"/>
</dbReference>
<dbReference type="NCBIfam" id="TIGR00165">
    <property type="entry name" value="S18"/>
    <property type="match status" value="1"/>
</dbReference>
<dbReference type="PANTHER" id="PTHR13479">
    <property type="entry name" value="30S RIBOSOMAL PROTEIN S18"/>
    <property type="match status" value="1"/>
</dbReference>
<dbReference type="PANTHER" id="PTHR13479:SF40">
    <property type="entry name" value="SMALL RIBOSOMAL SUBUNIT PROTEIN BS18M"/>
    <property type="match status" value="1"/>
</dbReference>
<dbReference type="Pfam" id="PF01084">
    <property type="entry name" value="Ribosomal_S18"/>
    <property type="match status" value="1"/>
</dbReference>
<dbReference type="PRINTS" id="PR00974">
    <property type="entry name" value="RIBOSOMALS18"/>
</dbReference>
<dbReference type="SUPFAM" id="SSF46911">
    <property type="entry name" value="Ribosomal protein S18"/>
    <property type="match status" value="1"/>
</dbReference>
<dbReference type="PROSITE" id="PS00057">
    <property type="entry name" value="RIBOSOMAL_S18"/>
    <property type="match status" value="1"/>
</dbReference>
<evidence type="ECO:0000255" key="1">
    <source>
        <dbReference type="HAMAP-Rule" id="MF_00270"/>
    </source>
</evidence>
<evidence type="ECO:0000305" key="2"/>
<organism>
    <name type="scientific">Lacticaseibacillus casei (strain BL23)</name>
    <name type="common">Lactobacillus casei</name>
    <dbReference type="NCBI Taxonomy" id="543734"/>
    <lineage>
        <taxon>Bacteria</taxon>
        <taxon>Bacillati</taxon>
        <taxon>Bacillota</taxon>
        <taxon>Bacilli</taxon>
        <taxon>Lactobacillales</taxon>
        <taxon>Lactobacillaceae</taxon>
        <taxon>Lacticaseibacillus</taxon>
    </lineage>
</organism>
<feature type="chain" id="PRO_1000114427" description="Small ribosomal subunit protein bS18">
    <location>
        <begin position="1"/>
        <end position="78"/>
    </location>
</feature>
<reference key="1">
    <citation type="submission" date="2008-06" db="EMBL/GenBank/DDBJ databases">
        <title>Lactobacillus casei BL23 complete genome sequence.</title>
        <authorList>
            <person name="Maze A."/>
            <person name="Boel G."/>
            <person name="Bourand A."/>
            <person name="Loux V."/>
            <person name="Gibrat J.F."/>
            <person name="Zuniga M."/>
            <person name="Hartke A."/>
            <person name="Deutscher J."/>
        </authorList>
    </citation>
    <scope>NUCLEOTIDE SEQUENCE [LARGE SCALE GENOMIC DNA]</scope>
    <source>
        <strain>BL23</strain>
    </source>
</reference>
<name>RS18_LACCB</name>
<protein>
    <recommendedName>
        <fullName evidence="1">Small ribosomal subunit protein bS18</fullName>
    </recommendedName>
    <alternativeName>
        <fullName evidence="2">30S ribosomal protein S18</fullName>
    </alternativeName>
</protein>
<gene>
    <name evidence="1" type="primary">rpsR</name>
    <name type="ordered locus">LCABL_00110</name>
</gene>
<comment type="function">
    <text evidence="1">Binds as a heterodimer with protein bS6 to the central domain of the 16S rRNA, where it helps stabilize the platform of the 30S subunit.</text>
</comment>
<comment type="subunit">
    <text evidence="1">Part of the 30S ribosomal subunit. Forms a tight heterodimer with protein bS6.</text>
</comment>
<comment type="similarity">
    <text evidence="1">Belongs to the bacterial ribosomal protein bS18 family.</text>
</comment>
<keyword id="KW-0687">Ribonucleoprotein</keyword>
<keyword id="KW-0689">Ribosomal protein</keyword>
<keyword id="KW-0694">RNA-binding</keyword>
<keyword id="KW-0699">rRNA-binding</keyword>
<sequence length="78" mass="9128">MAQQRRGGRRRRKVDFIAANHIEYIDYKDTNLLDRFISERGKILPRRVTGTSAKNQRKLTIAIKRARIMGLLPFVSED</sequence>